<name>SOP2_CAEEL</name>
<gene>
    <name type="primary">sop-2</name>
    <name type="ORF">C50E10.4</name>
</gene>
<sequence>MSSNLTSNEMSSTSAIVEPPEAVKGNERDKSTRRSTSQVVRPEKHEVENALEDQCSSSSLPKEAQYYAKLDKKLEGKDPRSQFYEAVRLSADIFAHKFEKAVCSRQTFEPTNSIIKVLNTAEEEMLHEKVVPLPVSSKLQYYLNRGRYDTIFDRDEQLQRTADPMADEPDHVEKRVTSILEQASREMEEGEVEPVFYDGSDEDQELPIDLGAMRNLQRTNKFAARSSRMAARRGGRPGYRGAFRGAARGAPSRRPAPAAEVAPETPVAAPMAPAAPAAPATPEAAPAAEVMDTSIATEMPQESAVDLSNVSAATEMDTSKEGEASRPTSEKKKKIRTTEMDRLMSMDLGPKDGGRVGELGHMWPESRRRPAAPLPETPAAQPRKSLPRRAAEKKKPEDSDAAEEQEVEMEVDNDASTSTPRNARGGRGGGNRRGSRRGQKRTSGGSGKLVEPKKEPVDEPAEKIPKRSEAAPEVPATATTKEAPPSTSSSPPDAPATPATPASSDSRDSPRKIRAMIFSLTGSPPESETPPVLQQEQVISTAAPTAGRHPNIIQQVPHINRIPPQPLRRLTAPQAPPASQPEEPPVQQTVPVVKVELASAPAPIVRDPQSTEPVPPAMPTLVENNHEATLILPPNKTSDYTRWNAQDLINWVRLLITNNVDSTIAIMVREEFDGETLACLVLDDDFRKEVPIPYGHYKKMKIYGTEVLNHYRTEKYQADLRKFHEELAAWKAQQR</sequence>
<dbReference type="EMBL" id="CU457740">
    <property type="protein sequence ID" value="CAM36334.1"/>
    <property type="molecule type" value="Genomic_DNA"/>
</dbReference>
<dbReference type="RefSeq" id="NP_001254341.1">
    <property type="nucleotide sequence ID" value="NM_001267412.2"/>
</dbReference>
<dbReference type="BioGRID" id="40175">
    <property type="interactions" value="13"/>
</dbReference>
<dbReference type="DIP" id="DIP-25161N"/>
<dbReference type="FunCoup" id="Q965H3">
    <property type="interactions" value="339"/>
</dbReference>
<dbReference type="IntAct" id="Q965H3">
    <property type="interactions" value="6"/>
</dbReference>
<dbReference type="STRING" id="6239.C50E10.4b.1"/>
<dbReference type="PaxDb" id="6239-C50E10.4b"/>
<dbReference type="EnsemblMetazoa" id="C50E10.4a.1">
    <property type="protein sequence ID" value="C50E10.4a.1"/>
    <property type="gene ID" value="WBGene00004945"/>
</dbReference>
<dbReference type="GeneID" id="174874"/>
<dbReference type="KEGG" id="cel:CELE_C50E10.4"/>
<dbReference type="UCSC" id="C50E10.4">
    <property type="organism name" value="c. elegans"/>
</dbReference>
<dbReference type="AGR" id="WB:WBGene00004945"/>
<dbReference type="CTD" id="174874"/>
<dbReference type="WormBase" id="C50E10.4a">
    <property type="protein sequence ID" value="CE32334"/>
    <property type="gene ID" value="WBGene00004945"/>
    <property type="gene designation" value="sop-2"/>
</dbReference>
<dbReference type="eggNOG" id="ENOG502SA26">
    <property type="taxonomic scope" value="Eukaryota"/>
</dbReference>
<dbReference type="GeneTree" id="ENSGT00970000198327"/>
<dbReference type="InParanoid" id="Q965H3"/>
<dbReference type="OrthoDB" id="5911739at2759"/>
<dbReference type="SignaLink" id="Q965H3"/>
<dbReference type="PRO" id="PR:Q965H3"/>
<dbReference type="Proteomes" id="UP000001940">
    <property type="component" value="Chromosome II"/>
</dbReference>
<dbReference type="Bgee" id="WBGene00004945">
    <property type="expression patterns" value="Expressed in pharyngeal muscle cell (C elegans) and 4 other cell types or tissues"/>
</dbReference>
<dbReference type="ExpressionAtlas" id="Q965H3">
    <property type="expression patterns" value="baseline and differential"/>
</dbReference>
<dbReference type="GO" id="GO:0016604">
    <property type="term" value="C:nuclear body"/>
    <property type="evidence" value="ECO:0000314"/>
    <property type="project" value="UniProtKB"/>
</dbReference>
<dbReference type="GO" id="GO:0016607">
    <property type="term" value="C:nuclear speck"/>
    <property type="evidence" value="ECO:0000314"/>
    <property type="project" value="WormBase"/>
</dbReference>
<dbReference type="GO" id="GO:0019899">
    <property type="term" value="F:enzyme binding"/>
    <property type="evidence" value="ECO:0000353"/>
    <property type="project" value="WormBase"/>
</dbReference>
<dbReference type="GO" id="GO:0042802">
    <property type="term" value="F:identical protein binding"/>
    <property type="evidence" value="ECO:0000353"/>
    <property type="project" value="WormBase"/>
</dbReference>
<dbReference type="GO" id="GO:0042803">
    <property type="term" value="F:protein homodimerization activity"/>
    <property type="evidence" value="ECO:0000314"/>
    <property type="project" value="UniProtKB"/>
</dbReference>
<dbReference type="GO" id="GO:0003723">
    <property type="term" value="F:RNA binding"/>
    <property type="evidence" value="ECO:0000314"/>
    <property type="project" value="UniProtKB"/>
</dbReference>
<dbReference type="GO" id="GO:0031625">
    <property type="term" value="F:ubiquitin protein ligase binding"/>
    <property type="evidence" value="ECO:0000353"/>
    <property type="project" value="UniProtKB"/>
</dbReference>
<dbReference type="GO" id="GO:0009952">
    <property type="term" value="P:anterior/posterior pattern specification"/>
    <property type="evidence" value="ECO:0000316"/>
    <property type="project" value="WormBase"/>
</dbReference>
<dbReference type="GO" id="GO:0007411">
    <property type="term" value="P:axon guidance"/>
    <property type="evidence" value="ECO:0000315"/>
    <property type="project" value="WormBase"/>
</dbReference>
<dbReference type="GO" id="GO:0040029">
    <property type="term" value="P:epigenetic regulation of gene expression"/>
    <property type="evidence" value="ECO:0000314"/>
    <property type="project" value="UniProtKB"/>
</dbReference>
<dbReference type="GO" id="GO:0010607">
    <property type="term" value="P:negative regulation of cytoplasmic mRNA processing body assembly"/>
    <property type="evidence" value="ECO:0000315"/>
    <property type="project" value="WormBase"/>
</dbReference>
<dbReference type="GO" id="GO:0045892">
    <property type="term" value="P:negative regulation of DNA-templated transcription"/>
    <property type="evidence" value="ECO:0000315"/>
    <property type="project" value="UniProtKB"/>
</dbReference>
<dbReference type="GO" id="GO:0040015">
    <property type="term" value="P:negative regulation of multicellular organism growth"/>
    <property type="evidence" value="ECO:0000315"/>
    <property type="project" value="WormBase"/>
</dbReference>
<dbReference type="GO" id="GO:0002119">
    <property type="term" value="P:nematode larval development"/>
    <property type="evidence" value="ECO:0000316"/>
    <property type="project" value="WormBase"/>
</dbReference>
<dbReference type="GO" id="GO:0048665">
    <property type="term" value="P:neuron fate specification"/>
    <property type="evidence" value="ECO:0000315"/>
    <property type="project" value="WormBase"/>
</dbReference>
<dbReference type="GO" id="GO:0034504">
    <property type="term" value="P:protein localization to nucleus"/>
    <property type="evidence" value="ECO:0000315"/>
    <property type="project" value="UniProtKB"/>
</dbReference>
<dbReference type="GO" id="GO:0042659">
    <property type="term" value="P:regulation of cell fate specification"/>
    <property type="evidence" value="ECO:0000315"/>
    <property type="project" value="WormBase"/>
</dbReference>
<dbReference type="GO" id="GO:0030334">
    <property type="term" value="P:regulation of cell migration"/>
    <property type="evidence" value="ECO:0000315"/>
    <property type="project" value="WormBase"/>
</dbReference>
<dbReference type="GO" id="GO:0040034">
    <property type="term" value="P:regulation of development, heterochronic"/>
    <property type="evidence" value="ECO:0000315"/>
    <property type="project" value="WormBase"/>
</dbReference>
<feature type="chain" id="PRO_0000072039" description="Polycomb protein sop-2">
    <location>
        <begin position="1"/>
        <end position="735"/>
    </location>
</feature>
<feature type="region of interest" description="Disordered" evidence="1">
    <location>
        <begin position="1"/>
        <end position="59"/>
    </location>
</feature>
<feature type="region of interest" description="Disordered" evidence="1">
    <location>
        <begin position="223"/>
        <end position="288"/>
    </location>
</feature>
<feature type="region of interest" description="RNA-binding">
    <location>
        <begin position="224"/>
        <end position="503"/>
    </location>
</feature>
<feature type="region of interest" description="Disordered" evidence="1">
    <location>
        <begin position="300"/>
        <end position="534"/>
    </location>
</feature>
<feature type="region of interest" description="SAM-like">
    <location>
        <begin position="621"/>
        <end position="712"/>
    </location>
</feature>
<feature type="compositionally biased region" description="Polar residues" evidence="1">
    <location>
        <begin position="1"/>
        <end position="15"/>
    </location>
</feature>
<feature type="compositionally biased region" description="Low complexity" evidence="1">
    <location>
        <begin position="239"/>
        <end position="288"/>
    </location>
</feature>
<feature type="compositionally biased region" description="Basic and acidic residues" evidence="1">
    <location>
        <begin position="317"/>
        <end position="355"/>
    </location>
</feature>
<feature type="compositionally biased region" description="Basic and acidic residues" evidence="1">
    <location>
        <begin position="389"/>
        <end position="398"/>
    </location>
</feature>
<feature type="compositionally biased region" description="Acidic residues" evidence="1">
    <location>
        <begin position="399"/>
        <end position="413"/>
    </location>
</feature>
<feature type="compositionally biased region" description="Basic and acidic residues" evidence="1">
    <location>
        <begin position="450"/>
        <end position="470"/>
    </location>
</feature>
<feature type="compositionally biased region" description="Low complexity" evidence="1">
    <location>
        <begin position="471"/>
        <end position="504"/>
    </location>
</feature>
<feature type="compositionally biased region" description="Polar residues" evidence="1">
    <location>
        <begin position="520"/>
        <end position="534"/>
    </location>
</feature>
<feature type="mutagenesis site" description="In bx91; induces derepression of homeotic genes and affects sumoylation at 25 degrees Celsius." evidence="2">
    <original>P</original>
    <variation>S</variation>
    <location>
        <position position="633"/>
    </location>
</feature>
<keyword id="KW-0156">Chromatin regulator</keyword>
<keyword id="KW-0539">Nucleus</keyword>
<keyword id="KW-1185">Reference proteome</keyword>
<keyword id="KW-0678">Repressor</keyword>
<keyword id="KW-0694">RNA-binding</keyword>
<keyword id="KW-0804">Transcription</keyword>
<keyword id="KW-0805">Transcription regulation</keyword>
<keyword id="KW-0832">Ubl conjugation</keyword>
<proteinExistence type="evidence at protein level"/>
<protein>
    <recommendedName>
        <fullName>Polycomb protein sop-2</fullName>
    </recommendedName>
    <alternativeName>
        <fullName>Suppressor of pal-1 protein 2</fullName>
    </alternativeName>
</protein>
<evidence type="ECO:0000256" key="1">
    <source>
        <dbReference type="SAM" id="MobiDB-lite"/>
    </source>
</evidence>
<evidence type="ECO:0000269" key="2">
    <source>
    </source>
</evidence>
<evidence type="ECO:0000269" key="3">
    <source>
    </source>
</evidence>
<evidence type="ECO:0000269" key="4">
    <source>
    </source>
</evidence>
<comment type="function">
    <text evidence="2 4">Polycomb group (PcG) protein. PcG proteins act by forming multiprotein complexes, which are required to maintain the transcriptionally repressive state of homeotic genes throughout development. PcG proteins are not required to initiate repression, but to maintain it during later stages of development. Also required to repress expression of other genes and for localization of sor-1. Binds RNA.</text>
</comment>
<comment type="subunit">
    <text evidence="3 4">Homodimer. Interacts with ubc-9. Binds through its N-terminal region to the N-terminal region of sor-1.</text>
</comment>
<comment type="interaction">
    <interactant intactId="EBI-331594">
        <id>Q965H3</id>
    </interactant>
    <interactant intactId="EBI-326963">
        <id>P34619</id>
        <label>sor-1</label>
    </interactant>
    <organismsDiffer>false</organismsDiffer>
    <experiments>4</experiments>
</comment>
<comment type="subcellular location">
    <subcellularLocation>
        <location evidence="2 3">Nucleus</location>
    </subcellularLocation>
    <text>Forms subnuclear bodies.</text>
</comment>
<comment type="tissue specificity">
    <text evidence="2">Widely expressed. Weakly expressed in most somatic cells of 50-cell stage embryos. At 200 cell stage, it is strongly expressed. By comma stage, it is expressed in most somatic cells.</text>
</comment>
<comment type="domain">
    <text>The RNA-binding region is essential for the localization to subnuclear bodies and its function.</text>
</comment>
<comment type="domain">
    <text>The SAM-like domain, although only slightly related to the SAM domain, apparently displays a similar function. It is essential for homodimerization, the interaction with ubc-9, and the formation of subnuclear bodies.</text>
</comment>
<comment type="PTM">
    <text evidence="3">Sumoylated by ubc-9. Sumoylation is required for the transcriptional regulation of homeotic genes.</text>
</comment>
<reference key="1">
    <citation type="journal article" date="1998" name="Science">
        <title>Genome sequence of the nematode C. elegans: a platform for investigating biology.</title>
        <authorList>
            <consortium name="The C. elegans sequencing consortium"/>
        </authorList>
    </citation>
    <scope>NUCLEOTIDE SEQUENCE [LARGE SCALE GENOMIC DNA]</scope>
    <source>
        <strain>Bristol N2</strain>
    </source>
</reference>
<reference key="2">
    <citation type="journal article" date="2003" name="Dev. Cell">
        <title>Global regulation of Hox gene expression in C. elegans by a SAM domain protein.</title>
        <authorList>
            <person name="Zhang H."/>
            <person name="Azevedo R.B.R."/>
            <person name="Lints R."/>
            <person name="Doyle C."/>
            <person name="Teng Y."/>
            <person name="Haber D."/>
            <person name="Emmons S.W."/>
        </authorList>
    </citation>
    <scope>FUNCTION</scope>
    <scope>SUBCELLULAR LOCATION</scope>
    <scope>DIMERIZATION</scope>
    <scope>TISSUE SPECIFICITY</scope>
    <scope>MUTAGENESIS OF PRO-633</scope>
</reference>
<reference key="3">
    <citation type="journal article" date="2004" name="Mol. Cell">
        <title>The C. elegans Polycomb gene sop-2 encodes an RNA binding protein.</title>
        <authorList>
            <person name="Zhang H."/>
            <person name="Christoforou A."/>
            <person name="Aravind L."/>
            <person name="Emmons S.W."/>
            <person name="Van Den Heuvel S."/>
            <person name="Haber D.A."/>
        </authorList>
    </citation>
    <scope>RNA-BINDING</scope>
</reference>
<reference key="4">
    <citation type="journal article" date="2004" name="Nat. Genet.">
        <title>SUMO modification is required for in vivo Hox gene regulation by the Caenorhabditis elegans Polycomb group protein SOP-2.</title>
        <authorList>
            <person name="Zhang H."/>
            <person name="Smolen G.A."/>
            <person name="Palmer R."/>
            <person name="Christoforou A."/>
            <person name="van den Heuvel S."/>
            <person name="Haber D.A."/>
        </authorList>
    </citation>
    <scope>SUBCELLULAR LOCATION</scope>
    <scope>INTERACTION WITH UBC-9</scope>
    <scope>SUMOYLATION</scope>
</reference>
<reference key="5">
    <citation type="journal article" date="2006" name="Development">
        <title>RNA-binding proteins SOP-2 and SOR-1 form a novel PcG-like complex in C. elegans.</title>
        <authorList>
            <person name="Zhang T."/>
            <person name="Sun Y."/>
            <person name="Tian E."/>
            <person name="Deng H."/>
            <person name="Zhang Y."/>
            <person name="Luo X."/>
            <person name="Cai Q."/>
            <person name="Wang H."/>
            <person name="Chai J."/>
            <person name="Zhang H."/>
        </authorList>
    </citation>
    <scope>FUNCTION</scope>
    <scope>INTERACTION WITH SOR-1</scope>
</reference>
<accession>Q965H3</accession>
<accession>A3QMA2</accession>
<organism>
    <name type="scientific">Caenorhabditis elegans</name>
    <dbReference type="NCBI Taxonomy" id="6239"/>
    <lineage>
        <taxon>Eukaryota</taxon>
        <taxon>Metazoa</taxon>
        <taxon>Ecdysozoa</taxon>
        <taxon>Nematoda</taxon>
        <taxon>Chromadorea</taxon>
        <taxon>Rhabditida</taxon>
        <taxon>Rhabditina</taxon>
        <taxon>Rhabditomorpha</taxon>
        <taxon>Rhabditoidea</taxon>
        <taxon>Rhabditidae</taxon>
        <taxon>Peloderinae</taxon>
        <taxon>Caenorhabditis</taxon>
    </lineage>
</organism>